<name>SERIC_MONBE</name>
<accession>A9UY97</accession>
<dbReference type="EMBL" id="CH991549">
    <property type="protein sequence ID" value="EDQ89821.1"/>
    <property type="molecule type" value="Genomic_DNA"/>
</dbReference>
<dbReference type="RefSeq" id="XP_001745243.1">
    <property type="nucleotide sequence ID" value="XM_001745191.1"/>
</dbReference>
<dbReference type="SMR" id="A9UY97"/>
<dbReference type="FunCoup" id="A9UY97">
    <property type="interactions" value="1212"/>
</dbReference>
<dbReference type="STRING" id="81824.A9UY97"/>
<dbReference type="EnsemblProtists" id="EDQ89821">
    <property type="protein sequence ID" value="EDQ89821"/>
    <property type="gene ID" value="MONBRDRAFT_18904"/>
</dbReference>
<dbReference type="KEGG" id="mbr:MONBRDRAFT_18904"/>
<dbReference type="eggNOG" id="KOG2592">
    <property type="taxonomic scope" value="Eukaryota"/>
</dbReference>
<dbReference type="InParanoid" id="A9UY97"/>
<dbReference type="OMA" id="DKHCNPL"/>
<dbReference type="Proteomes" id="UP000001357">
    <property type="component" value="Unassembled WGS sequence"/>
</dbReference>
<dbReference type="GO" id="GO:0005789">
    <property type="term" value="C:endoplasmic reticulum membrane"/>
    <property type="evidence" value="ECO:0007669"/>
    <property type="project" value="UniProtKB-SubCell"/>
</dbReference>
<dbReference type="GO" id="GO:0016020">
    <property type="term" value="C:membrane"/>
    <property type="evidence" value="ECO:0000318"/>
    <property type="project" value="GO_Central"/>
</dbReference>
<dbReference type="GO" id="GO:0008654">
    <property type="term" value="P:phospholipid biosynthetic process"/>
    <property type="evidence" value="ECO:0007669"/>
    <property type="project" value="UniProtKB-KW"/>
</dbReference>
<dbReference type="InterPro" id="IPR005016">
    <property type="entry name" value="TDE1/TMS"/>
</dbReference>
<dbReference type="PANTHER" id="PTHR10383">
    <property type="entry name" value="SERINE INCORPORATOR"/>
    <property type="match status" value="1"/>
</dbReference>
<dbReference type="PANTHER" id="PTHR10383:SF9">
    <property type="entry name" value="SERINE INCORPORATOR, ISOFORM F"/>
    <property type="match status" value="1"/>
</dbReference>
<dbReference type="Pfam" id="PF03348">
    <property type="entry name" value="Serinc"/>
    <property type="match status" value="1"/>
</dbReference>
<feature type="chain" id="PRO_0000342156" description="Probable serine incorporator">
    <location>
        <begin position="1"/>
        <end position="483"/>
    </location>
</feature>
<feature type="transmembrane region" description="Helical" evidence="2">
    <location>
        <begin position="43"/>
        <end position="63"/>
    </location>
</feature>
<feature type="transmembrane region" description="Helical" evidence="2">
    <location>
        <begin position="109"/>
        <end position="129"/>
    </location>
</feature>
<feature type="transmembrane region" description="Helical" evidence="2">
    <location>
        <begin position="146"/>
        <end position="166"/>
    </location>
</feature>
<feature type="transmembrane region" description="Helical" evidence="2">
    <location>
        <begin position="169"/>
        <end position="189"/>
    </location>
</feature>
<feature type="transmembrane region" description="Helical" evidence="2">
    <location>
        <begin position="218"/>
        <end position="238"/>
    </location>
</feature>
<feature type="transmembrane region" description="Helical" evidence="2">
    <location>
        <begin position="249"/>
        <end position="269"/>
    </location>
</feature>
<feature type="transmembrane region" description="Helical" evidence="2">
    <location>
        <begin position="274"/>
        <end position="294"/>
    </location>
</feature>
<feature type="transmembrane region" description="Helical" evidence="2">
    <location>
        <begin position="295"/>
        <end position="315"/>
    </location>
</feature>
<feature type="transmembrane region" description="Helical" evidence="2">
    <location>
        <begin position="338"/>
        <end position="358"/>
    </location>
</feature>
<feature type="transmembrane region" description="Helical" evidence="2">
    <location>
        <begin position="414"/>
        <end position="434"/>
    </location>
</feature>
<feature type="transmembrane region" description="Helical" evidence="2">
    <location>
        <begin position="457"/>
        <end position="477"/>
    </location>
</feature>
<sequence>MGLVASCFGGLAAYAAESVACCCGSAACSLCCRSCPSCTNSTSTRITYAILFFLSSIAAWIMLDKDVSKGLMKVCCYHSTLFRLVLFTQPAIKTTTNVVPWGELGVMRIMFSVCLFHLFLSLCTIGVSSSKDPRSSLHNGMWFIKLILLVGAMVGSFFISNSFFIGASWSWIGLVGAVLFMIVQFILLVDFAYSWNDSWVGKLEEGSKCAGFGSYRLISATVMLMAFVITLTVLMFHFYTNGDCKLSNFFIGFNLALALLVTLTSMLPSVREALPSSGILQSSVVAAYATYLVWSAVSGVPSTCHPLIAVAPLFLSSRGFLPPLPYVALKPAECGGDAGTNTAAIVIGALLTFISVAYSSIRTSSKSQLGKLGLQQGSNENIYLMDDKAADFDEDDEDRRLQRVVDNEQDAVRYSWSFFHLTFAVAALYLMMVLTEWDSSDADVRIGKGWASVWVQVVSSWVIFLLYGWTMMAPVCLPDRDFS</sequence>
<organism>
    <name type="scientific">Monosiga brevicollis</name>
    <name type="common">Choanoflagellate</name>
    <dbReference type="NCBI Taxonomy" id="81824"/>
    <lineage>
        <taxon>Eukaryota</taxon>
        <taxon>Choanoflagellata</taxon>
        <taxon>Craspedida</taxon>
        <taxon>Salpingoecidae</taxon>
        <taxon>Monosiga</taxon>
    </lineage>
</organism>
<gene>
    <name type="primary">serinc</name>
    <name type="ORF">18904</name>
</gene>
<evidence type="ECO:0000250" key="1"/>
<evidence type="ECO:0000255" key="2"/>
<evidence type="ECO:0000305" key="3"/>
<keyword id="KW-0256">Endoplasmic reticulum</keyword>
<keyword id="KW-0444">Lipid biosynthesis</keyword>
<keyword id="KW-0443">Lipid metabolism</keyword>
<keyword id="KW-0472">Membrane</keyword>
<keyword id="KW-0594">Phospholipid biosynthesis</keyword>
<keyword id="KW-1208">Phospholipid metabolism</keyword>
<keyword id="KW-1185">Reference proteome</keyword>
<keyword id="KW-0812">Transmembrane</keyword>
<keyword id="KW-1133">Transmembrane helix</keyword>
<reference key="1">
    <citation type="journal article" date="2008" name="Nature">
        <title>The genome of the choanoflagellate Monosiga brevicollis and the origin of metazoans.</title>
        <authorList>
            <consortium name="JGI Sequencing"/>
            <person name="King N."/>
            <person name="Westbrook M.J."/>
            <person name="Young S.L."/>
            <person name="Kuo A."/>
            <person name="Abedin M."/>
            <person name="Chapman J."/>
            <person name="Fairclough S."/>
            <person name="Hellsten U."/>
            <person name="Isogai Y."/>
            <person name="Letunic I."/>
            <person name="Marr M."/>
            <person name="Pincus D."/>
            <person name="Putnam N."/>
            <person name="Rokas A."/>
            <person name="Wright K.J."/>
            <person name="Zuzow R."/>
            <person name="Dirks W."/>
            <person name="Good M."/>
            <person name="Goodstein D."/>
            <person name="Lemons D."/>
            <person name="Li W."/>
            <person name="Lyons J.B."/>
            <person name="Morris A."/>
            <person name="Nichols S."/>
            <person name="Richter D.J."/>
            <person name="Salamov A."/>
            <person name="Bork P."/>
            <person name="Lim W.A."/>
            <person name="Manning G."/>
            <person name="Miller W.T."/>
            <person name="McGinnis W."/>
            <person name="Shapiro H."/>
            <person name="Tjian R."/>
            <person name="Grigoriev I.V."/>
            <person name="Rokhsar D."/>
        </authorList>
    </citation>
    <scope>NUCLEOTIDE SEQUENCE [LARGE SCALE GENOMIC DNA]</scope>
    <source>
        <strain>MX1 / ATCC 50154</strain>
    </source>
</reference>
<proteinExistence type="inferred from homology"/>
<comment type="function">
    <text evidence="1">Enhances the incorporation of serine into phosphatidylserine and sphingolipids.</text>
</comment>
<comment type="subcellular location">
    <subcellularLocation>
        <location evidence="1">Endoplasmic reticulum membrane</location>
        <topology evidence="1">Multi-pass membrane protein</topology>
    </subcellularLocation>
</comment>
<comment type="similarity">
    <text evidence="3">Belongs to the TDE1 family.</text>
</comment>
<protein>
    <recommendedName>
        <fullName>Probable serine incorporator</fullName>
    </recommendedName>
</protein>